<organism>
    <name type="scientific">Cicer arietinum</name>
    <name type="common">Chickpea</name>
    <name type="synonym">Garbanzo</name>
    <dbReference type="NCBI Taxonomy" id="3827"/>
    <lineage>
        <taxon>Eukaryota</taxon>
        <taxon>Viridiplantae</taxon>
        <taxon>Streptophyta</taxon>
        <taxon>Embryophyta</taxon>
        <taxon>Tracheophyta</taxon>
        <taxon>Spermatophyta</taxon>
        <taxon>Magnoliopsida</taxon>
        <taxon>eudicotyledons</taxon>
        <taxon>Gunneridae</taxon>
        <taxon>Pentapetalae</taxon>
        <taxon>rosids</taxon>
        <taxon>fabids</taxon>
        <taxon>Fabales</taxon>
        <taxon>Fabaceae</taxon>
        <taxon>Papilionoideae</taxon>
        <taxon>50 kb inversion clade</taxon>
        <taxon>NPAAA clade</taxon>
        <taxon>Hologalegina</taxon>
        <taxon>IRL clade</taxon>
        <taxon>Cicereae</taxon>
        <taxon>Cicer</taxon>
    </lineage>
</organism>
<sequence>MTSHDQSYRAGEAKGRTEEKTNQMIGNIEDKAQAAKEKAQQAAQTAKDKTSQTAQAAKEKTQQTAQAAKDKTQQTTQATKEKAQDTTGRAKEKGSEMGQSTKETAQSGKDNSAGFLQQTGEKAKGMAQGATDAVKQTFGMTNDDQDKDHFPTNRH</sequence>
<keyword id="KW-1185">Reference proteome</keyword>
<keyword id="KW-0677">Repeat</keyword>
<proteinExistence type="evidence at transcript level"/>
<feature type="chain" id="PRO_0000221221" description="Late embryogenesis abundant protein 2">
    <location>
        <begin position="1"/>
        <end position="155"/>
    </location>
</feature>
<feature type="repeat" description="1">
    <location>
        <begin position="53"/>
        <end position="63"/>
    </location>
</feature>
<feature type="repeat" description="2">
    <location>
        <begin position="64"/>
        <end position="74"/>
    </location>
</feature>
<feature type="region of interest" description="Disordered" evidence="1">
    <location>
        <begin position="1"/>
        <end position="155"/>
    </location>
</feature>
<feature type="region of interest" description="2 X 11 AA approximate tandem repeats of T-A-Q-A-A-K-E-K-T-Q-Q">
    <location>
        <begin position="53"/>
        <end position="74"/>
    </location>
</feature>
<feature type="compositionally biased region" description="Basic and acidic residues" evidence="1">
    <location>
        <begin position="11"/>
        <end position="21"/>
    </location>
</feature>
<feature type="compositionally biased region" description="Basic and acidic residues" evidence="1">
    <location>
        <begin position="28"/>
        <end position="39"/>
    </location>
</feature>
<feature type="compositionally biased region" description="Low complexity" evidence="1">
    <location>
        <begin position="40"/>
        <end position="78"/>
    </location>
</feature>
<feature type="compositionally biased region" description="Basic and acidic residues" evidence="1">
    <location>
        <begin position="79"/>
        <end position="95"/>
    </location>
</feature>
<feature type="compositionally biased region" description="Polar residues" evidence="1">
    <location>
        <begin position="97"/>
        <end position="120"/>
    </location>
</feature>
<feature type="compositionally biased region" description="Basic and acidic residues" evidence="1">
    <location>
        <begin position="144"/>
        <end position="155"/>
    </location>
</feature>
<protein>
    <recommendedName>
        <fullName>Late embryogenesis abundant protein 2</fullName>
    </recommendedName>
    <alternativeName>
        <fullName>CapLEA-2</fullName>
    </alternativeName>
</protein>
<dbReference type="EMBL" id="AJ224519">
    <property type="protein sequence ID" value="CAA12027.1"/>
    <property type="molecule type" value="mRNA"/>
</dbReference>
<dbReference type="RefSeq" id="NP_001296579.1">
    <property type="nucleotide sequence ID" value="NM_001309650.1"/>
</dbReference>
<dbReference type="SMR" id="O49817"/>
<dbReference type="STRING" id="3827.O49817"/>
<dbReference type="GeneID" id="101511433"/>
<dbReference type="KEGG" id="cam:101511433"/>
<dbReference type="eggNOG" id="KOG4744">
    <property type="taxonomic scope" value="Eukaryota"/>
</dbReference>
<dbReference type="OrthoDB" id="2193576at2759"/>
<dbReference type="Proteomes" id="UP000087171">
    <property type="component" value="Unplaced"/>
</dbReference>
<dbReference type="Gene3D" id="1.20.120.20">
    <property type="entry name" value="Apolipoprotein"/>
    <property type="match status" value="1"/>
</dbReference>
<dbReference type="InterPro" id="IPR039624">
    <property type="entry name" value="LEA1/2/D7/KIN2"/>
</dbReference>
<dbReference type="PANTHER" id="PTHR34191">
    <property type="entry name" value="LATE EMBRYOGENESIS ABUNDANT PROTEIN (LEA) FAMILY PROTEIN"/>
    <property type="match status" value="1"/>
</dbReference>
<dbReference type="PANTHER" id="PTHR34191:SF20">
    <property type="entry name" value="LATE EMBRYOGENESIS ABUNDANT PROTEIN (LEA) FAMILY PROTEIN"/>
    <property type="match status" value="1"/>
</dbReference>
<comment type="tissue specificity">
    <text evidence="2">Highest expression is found in seeds. No expression detected in adult tissues.</text>
</comment>
<comment type="developmental stage">
    <text evidence="2">Not expressed in the first stages of embryogenesis. Levels increase during late embryogenesis and decrease in germinating seedlings.</text>
</comment>
<comment type="induction">
    <text evidence="2">Up-regulated in response to water stress.</text>
</comment>
<comment type="similarity">
    <text evidence="3">Belongs to the LEA type 4 family.</text>
</comment>
<name>LEA2_CICAR</name>
<reference key="1">
    <citation type="journal article" date="2001" name="Plant Physiol. Biochem.">
        <title>Water stress-regulated gene expression in Cicer arietinum seedlings and plants.</title>
        <authorList>
            <person name="Romo S."/>
            <person name="Dopico B."/>
            <person name="Labrador E."/>
        </authorList>
    </citation>
    <scope>NUCLEOTIDE SEQUENCE [MRNA]</scope>
    <scope>TISSUE SPECIFICITY</scope>
    <scope>DEVELOPMENTAL STAGE</scope>
    <scope>INDUCTION</scope>
    <source>
        <strain>cv. Castellana</strain>
        <tissue>Epicotyl</tissue>
    </source>
</reference>
<accession>O49817</accession>
<evidence type="ECO:0000256" key="1">
    <source>
        <dbReference type="SAM" id="MobiDB-lite"/>
    </source>
</evidence>
<evidence type="ECO:0000269" key="2">
    <source ref="1"/>
</evidence>
<evidence type="ECO:0000305" key="3"/>